<name>TAGPE_AGRFC</name>
<accession>A9CES6</accession>
<keyword id="KW-0119">Carbohydrate metabolism</keyword>
<keyword id="KW-0413">Isomerase</keyword>
<keyword id="KW-1185">Reference proteome</keyword>
<dbReference type="EC" id="5.1.3.40" evidence="1"/>
<dbReference type="EMBL" id="AE007870">
    <property type="protein sequence ID" value="AAK90219.1"/>
    <property type="molecule type" value="Genomic_DNA"/>
</dbReference>
<dbReference type="PIR" id="A98337">
    <property type="entry name" value="A98337"/>
</dbReference>
<dbReference type="PIR" id="AI2945">
    <property type="entry name" value="AI2945"/>
</dbReference>
<dbReference type="RefSeq" id="NP_357434.1">
    <property type="nucleotide sequence ID" value="NC_003063.2"/>
</dbReference>
<dbReference type="RefSeq" id="WP_010972812.1">
    <property type="nucleotide sequence ID" value="NC_003063.2"/>
</dbReference>
<dbReference type="SMR" id="A9CES6"/>
<dbReference type="STRING" id="176299.Atu3167"/>
<dbReference type="EnsemblBacteria" id="AAK90219">
    <property type="protein sequence ID" value="AAK90219"/>
    <property type="gene ID" value="Atu3167"/>
</dbReference>
<dbReference type="GeneID" id="1134969"/>
<dbReference type="KEGG" id="atu:Atu3167"/>
<dbReference type="PATRIC" id="fig|176299.10.peg.3012"/>
<dbReference type="eggNOG" id="COG4573">
    <property type="taxonomic scope" value="Bacteria"/>
</dbReference>
<dbReference type="HOGENOM" id="CLU_053334_0_0_5"/>
<dbReference type="OrthoDB" id="1672942at2"/>
<dbReference type="PhylomeDB" id="A9CES6"/>
<dbReference type="BioCyc" id="AGRO:ATU3167-MONOMER"/>
<dbReference type="BioCyc" id="MetaCyc:MONOMER-20149"/>
<dbReference type="Proteomes" id="UP000000813">
    <property type="component" value="Chromosome linear"/>
</dbReference>
<dbReference type="GO" id="GO:0005886">
    <property type="term" value="C:plasma membrane"/>
    <property type="evidence" value="ECO:0007669"/>
    <property type="project" value="TreeGrafter"/>
</dbReference>
<dbReference type="GO" id="GO:0016853">
    <property type="term" value="F:isomerase activity"/>
    <property type="evidence" value="ECO:0007669"/>
    <property type="project" value="UniProtKB-KW"/>
</dbReference>
<dbReference type="GO" id="GO:0005975">
    <property type="term" value="P:carbohydrate metabolic process"/>
    <property type="evidence" value="ECO:0007669"/>
    <property type="project" value="InterPro"/>
</dbReference>
<dbReference type="GO" id="GO:0009401">
    <property type="term" value="P:phosphoenolpyruvate-dependent sugar phosphotransferase system"/>
    <property type="evidence" value="ECO:0007669"/>
    <property type="project" value="TreeGrafter"/>
</dbReference>
<dbReference type="Gene3D" id="3.20.20.70">
    <property type="entry name" value="Aldolase class I"/>
    <property type="match status" value="1"/>
</dbReference>
<dbReference type="Gene3D" id="1.10.400.20">
    <property type="entry name" value="putative tagatose 6-phosphate kinase domain like"/>
    <property type="match status" value="1"/>
</dbReference>
<dbReference type="InterPro" id="IPR013785">
    <property type="entry name" value="Aldolase_TIM"/>
</dbReference>
<dbReference type="InterPro" id="IPR012062">
    <property type="entry name" value="GatZ/KbaZ-like"/>
</dbReference>
<dbReference type="InterPro" id="IPR050303">
    <property type="entry name" value="GatZ_KbaZ_carbometab"/>
</dbReference>
<dbReference type="NCBIfam" id="TIGR02810">
    <property type="entry name" value="agaZ_gatZ"/>
    <property type="match status" value="1"/>
</dbReference>
<dbReference type="PANTHER" id="PTHR32502:SF2">
    <property type="entry name" value="D-TAGATOSE-1,6-BISPHOSPHATE ALDOLASE SUBUNIT KBAZ"/>
    <property type="match status" value="1"/>
</dbReference>
<dbReference type="PANTHER" id="PTHR32502">
    <property type="entry name" value="N-ACETYLGALACTOSAMINE PERMEASE II COMPONENT-RELATED"/>
    <property type="match status" value="1"/>
</dbReference>
<dbReference type="Pfam" id="PF08013">
    <property type="entry name" value="GatZ_KbaZ-like"/>
    <property type="match status" value="1"/>
</dbReference>
<dbReference type="PIRSF" id="PIRSF009264">
    <property type="entry name" value="TagBP_ald_AgaZ"/>
    <property type="match status" value="1"/>
</dbReference>
<dbReference type="SUPFAM" id="SSF51569">
    <property type="entry name" value="Aldolase"/>
    <property type="match status" value="1"/>
</dbReference>
<protein>
    <recommendedName>
        <fullName evidence="2">D-tagatose 6-phosphate 4-epimerase</fullName>
        <ecNumber evidence="1">5.1.3.40</ecNumber>
    </recommendedName>
</protein>
<comment type="function">
    <text evidence="1">Involved in galactitol and D-altritol catabolism. Catalyzes the epimerization of D-tagatose 6-phosphate to D-fructose 6-phosphate.</text>
</comment>
<comment type="catalytic activity">
    <reaction evidence="1">
        <text>keto-D-tagatose 6-phosphate = keto-D-fructose 6-phosphate</text>
        <dbReference type="Rhea" id="RHEA:51712"/>
        <dbReference type="ChEBI" id="CHEBI:57579"/>
        <dbReference type="ChEBI" id="CHEBI:134283"/>
        <dbReference type="EC" id="5.1.3.40"/>
    </reaction>
</comment>
<comment type="biophysicochemical properties">
    <kinetics>
        <KM evidence="1">0.98 mM for D-tagatose 6-phosphate</KM>
        <text evidence="1">kcat is 8.7 sec(-1).</text>
    </kinetics>
</comment>
<comment type="pathway">
    <text evidence="1">Carbohydrate metabolism.</text>
</comment>
<comment type="induction">
    <text evidence="1">Up-regulated by growth on D-altritol or galactitol.</text>
</comment>
<comment type="disruption phenotype">
    <text evidence="1">Deletion of the gene leads to slow-growth phenotypes for both D-galactitol and D-altritol.</text>
</comment>
<comment type="similarity">
    <text evidence="2">Belongs to the GatZ/KbaZ family.</text>
</comment>
<gene>
    <name evidence="3" type="ordered locus">Atu3167</name>
</gene>
<reference key="1">
    <citation type="journal article" date="2001" name="Science">
        <title>The genome of the natural genetic engineer Agrobacterium tumefaciens C58.</title>
        <authorList>
            <person name="Wood D.W."/>
            <person name="Setubal J.C."/>
            <person name="Kaul R."/>
            <person name="Monks D.E."/>
            <person name="Kitajima J.P."/>
            <person name="Okura V.K."/>
            <person name="Zhou Y."/>
            <person name="Chen L."/>
            <person name="Wood G.E."/>
            <person name="Almeida N.F. Jr."/>
            <person name="Woo L."/>
            <person name="Chen Y."/>
            <person name="Paulsen I.T."/>
            <person name="Eisen J.A."/>
            <person name="Karp P.D."/>
            <person name="Bovee D. Sr."/>
            <person name="Chapman P."/>
            <person name="Clendenning J."/>
            <person name="Deatherage G."/>
            <person name="Gillet W."/>
            <person name="Grant C."/>
            <person name="Kutyavin T."/>
            <person name="Levy R."/>
            <person name="Li M.-J."/>
            <person name="McClelland E."/>
            <person name="Palmieri A."/>
            <person name="Raymond C."/>
            <person name="Rouse G."/>
            <person name="Saenphimmachak C."/>
            <person name="Wu Z."/>
            <person name="Romero P."/>
            <person name="Gordon D."/>
            <person name="Zhang S."/>
            <person name="Yoo H."/>
            <person name="Tao Y."/>
            <person name="Biddle P."/>
            <person name="Jung M."/>
            <person name="Krespan W."/>
            <person name="Perry M."/>
            <person name="Gordon-Kamm B."/>
            <person name="Liao L."/>
            <person name="Kim S."/>
            <person name="Hendrick C."/>
            <person name="Zhao Z.-Y."/>
            <person name="Dolan M."/>
            <person name="Chumley F."/>
            <person name="Tingey S.V."/>
            <person name="Tomb J.-F."/>
            <person name="Gordon M.P."/>
            <person name="Olson M.V."/>
            <person name="Nester E.W."/>
        </authorList>
    </citation>
    <scope>NUCLEOTIDE SEQUENCE [LARGE SCALE GENOMIC DNA]</scope>
    <source>
        <strain>C58 / ATCC 33970</strain>
    </source>
</reference>
<reference key="2">
    <citation type="journal article" date="2001" name="Science">
        <title>Genome sequence of the plant pathogen and biotechnology agent Agrobacterium tumefaciens C58.</title>
        <authorList>
            <person name="Goodner B."/>
            <person name="Hinkle G."/>
            <person name="Gattung S."/>
            <person name="Miller N."/>
            <person name="Blanchard M."/>
            <person name="Qurollo B."/>
            <person name="Goldman B.S."/>
            <person name="Cao Y."/>
            <person name="Askenazi M."/>
            <person name="Halling C."/>
            <person name="Mullin L."/>
            <person name="Houmiel K."/>
            <person name="Gordon J."/>
            <person name="Vaudin M."/>
            <person name="Iartchouk O."/>
            <person name="Epp A."/>
            <person name="Liu F."/>
            <person name="Wollam C."/>
            <person name="Allinger M."/>
            <person name="Doughty D."/>
            <person name="Scott C."/>
            <person name="Lappas C."/>
            <person name="Markelz B."/>
            <person name="Flanagan C."/>
            <person name="Crowell C."/>
            <person name="Gurson J."/>
            <person name="Lomo C."/>
            <person name="Sear C."/>
            <person name="Strub G."/>
            <person name="Cielo C."/>
            <person name="Slater S."/>
        </authorList>
    </citation>
    <scope>NUCLEOTIDE SEQUENCE [LARGE SCALE GENOMIC DNA]</scope>
    <source>
        <strain>C58 / ATCC 33970</strain>
    </source>
</reference>
<reference key="3">
    <citation type="journal article" date="2015" name="J. Biol. Chem.">
        <title>ATP-binding cassette (ABC) transport system solute-binding protein-guided identification of novel D-altritol and galactitol catabolic pathways in Agrobacterium tumefaciens C58.</title>
        <authorList>
            <person name="Wichelecki D.J."/>
            <person name="Vetting M.W."/>
            <person name="Chou L."/>
            <person name="Al-Obaidi N."/>
            <person name="Bouvier J.T."/>
            <person name="Almo S.C."/>
            <person name="Gerlt J.A."/>
        </authorList>
    </citation>
    <scope>FUNCTION</scope>
    <scope>CATALYTIC ACTIVITY</scope>
    <scope>BIOPHYSICOCHEMICAL PROPERTIES</scope>
    <scope>PATHWAY</scope>
    <scope>INDUCTION</scope>
    <scope>DISRUPTION PHENOTYPE</scope>
    <source>
        <strain>C58 / ATCC 33970</strain>
    </source>
</reference>
<sequence length="425" mass="45530">MTAILENLAAARRAGKPAGITSVCSAHPVVLRAAIRRAAASQTAVLIEATCNQVNHLGGYTGMTPRDFVAFVNSIAAEEGLPAELLIFGGDHLGPNPWRREKAEDALTKAAAMVDAYVTAGFRKIHLDASMGCAGEPAALDDVTIAHRAAKLTAVAEKAATEAGLPKPLYILGTEVPVPGGADHVLETVAPTEPQAARNTIDLHREIFAQHGLSDAFERVIAFVVQPGVEFGSDNVVAYDPQAAQSLSAVLDGEPRLVFEAHSTDYQTEPALAALVRDGYPILKVGPGLTFAYREALYALDMIASEMVGTYGDRPLARTMEKLMLSAPGDWQGHYHGDDITLRLQRHYSYSDRIRYYWTRPEALAAVSTLHKALDGKTIPETLLRQYLGELPLAAVAGKEPEEVLVAAVDQVLATYHAATGEGRH</sequence>
<proteinExistence type="evidence at protein level"/>
<feature type="chain" id="PRO_0000446637" description="D-tagatose 6-phosphate 4-epimerase">
    <location>
        <begin position="1"/>
        <end position="425"/>
    </location>
</feature>
<evidence type="ECO:0000269" key="1">
    <source>
    </source>
</evidence>
<evidence type="ECO:0000305" key="2"/>
<evidence type="ECO:0000312" key="3">
    <source>
        <dbReference type="EMBL" id="AAK90219.1"/>
    </source>
</evidence>
<organism>
    <name type="scientific">Agrobacterium fabrum (strain C58 / ATCC 33970)</name>
    <name type="common">Agrobacterium tumefaciens (strain C58)</name>
    <dbReference type="NCBI Taxonomy" id="176299"/>
    <lineage>
        <taxon>Bacteria</taxon>
        <taxon>Pseudomonadati</taxon>
        <taxon>Pseudomonadota</taxon>
        <taxon>Alphaproteobacteria</taxon>
        <taxon>Hyphomicrobiales</taxon>
        <taxon>Rhizobiaceae</taxon>
        <taxon>Rhizobium/Agrobacterium group</taxon>
        <taxon>Agrobacterium</taxon>
        <taxon>Agrobacterium tumefaciens complex</taxon>
    </lineage>
</organism>